<name>ATPB_CUSJA</name>
<proteinExistence type="inferred from homology"/>
<protein>
    <recommendedName>
        <fullName>ATP synthase subunit beta, plastid</fullName>
        <ecNumber>7.1.2.2</ecNumber>
    </recommendedName>
    <alternativeName>
        <fullName>ATP synthase F1 sector subunit beta</fullName>
    </alternativeName>
    <alternativeName>
        <fullName>F-ATPase subunit beta</fullName>
    </alternativeName>
</protein>
<evidence type="ECO:0000250" key="1"/>
<evidence type="ECO:0000305" key="2"/>
<sequence>MRINPPTYGSEISSIEKKNRGCIVQIIGPVLDVAFPPGKMPNIYNALVVKGRDTEQMNVTCEVQQLLGNNRVRAVAMNDTDGLMRGMEVIDTGTPITVPVGGSTLGRIFNVLGEPVDNFGPVDTNTTSTIHRSAPAFIQLDTKLSIFETGIKVVDFLAPYRRGGKIGLFGGAGVGKTVLIMELINNIAKAHGGVSVFGGVGERTREGNDLYMEMKESGVINENNITESKVALVYGQMNEPPGARMRVGLTALTMAEYFRDVNEQDVLLFIDNIFRFVQAGSEVSALLGRMPSAVGYQPTLSTEMGSLQERITSTKEGSITSIQAVYVPADDLTDPAPATTFAHLDATTVLSRGLAAKGIYPAVDPLDSTSMMLQPRIVGEEHYETAQKVKQTLQRYKELQDIIAILGLDELSEEDRLTVARARKIERFLSQPFFVAEVFTGSPGKYVGLAETIRGFNLILSGELDSLPEQAFYLVGNIDEATEKAMNLKT</sequence>
<accession>Q8MBG0</accession>
<reference key="1">
    <citation type="journal article" date="2002" name="Am. J. Bot.">
        <title>Monophyly of the Convolvulaceae and circumscription of their major lineages based on DNA sequences of multiple chloroplast loci.</title>
        <authorList>
            <person name="Stefanovic S."/>
            <person name="Krueger L."/>
            <person name="Olmstead R.G."/>
        </authorList>
        <dbReference type="AGRICOLA" id="IND23320510"/>
    </citation>
    <scope>NUCLEOTIDE SEQUENCE [GENOMIC DNA]</scope>
</reference>
<feature type="chain" id="PRO_0000254467" description="ATP synthase subunit beta, plastid">
    <location>
        <begin position="1"/>
        <end position="490"/>
    </location>
</feature>
<feature type="binding site" evidence="1">
    <location>
        <begin position="170"/>
        <end position="177"/>
    </location>
    <ligand>
        <name>ATP</name>
        <dbReference type="ChEBI" id="CHEBI:30616"/>
    </ligand>
</feature>
<comment type="function">
    <text evidence="1">Produces ATP from ADP in the presence of a proton gradient across the membrane. The catalytic sites are hosted primarily by the beta subunits (By similarity).</text>
</comment>
<comment type="catalytic activity">
    <reaction>
        <text>ATP + H2O + 4 H(+)(in) = ADP + phosphate + 5 H(+)(out)</text>
        <dbReference type="Rhea" id="RHEA:57720"/>
        <dbReference type="ChEBI" id="CHEBI:15377"/>
        <dbReference type="ChEBI" id="CHEBI:15378"/>
        <dbReference type="ChEBI" id="CHEBI:30616"/>
        <dbReference type="ChEBI" id="CHEBI:43474"/>
        <dbReference type="ChEBI" id="CHEBI:456216"/>
        <dbReference type="EC" id="7.1.2.2"/>
    </reaction>
</comment>
<comment type="subunit">
    <text evidence="1">F-type ATPases have 2 components, CF(1) - the catalytic core - and CF(0) - the membrane proton channel. CF(1) has five subunits: alpha(3), beta(3), gamma(1), delta(1), epsilon(1). CF(0) has four main subunits: a(1), b(1), b'(1) and c(9-12) (By similarity).</text>
</comment>
<comment type="subcellular location">
    <subcellularLocation>
        <location evidence="2">Plastid membrane</location>
        <topology evidence="2">Peripheral membrane protein</topology>
    </subcellularLocation>
</comment>
<comment type="similarity">
    <text evidence="2">Belongs to the ATPase alpha/beta chains family.</text>
</comment>
<comment type="caution">
    <text evidence="2">This organism being non-photosynthetic, the role of this protein is uncertain.</text>
</comment>
<dbReference type="EC" id="7.1.2.2"/>
<dbReference type="EMBL" id="AY100849">
    <property type="protein sequence ID" value="AAM52203.1"/>
    <property type="molecule type" value="Genomic_DNA"/>
</dbReference>
<dbReference type="SMR" id="Q8MBG0"/>
<dbReference type="GO" id="GO:0009535">
    <property type="term" value="C:chloroplast thylakoid membrane"/>
    <property type="evidence" value="ECO:0007669"/>
    <property type="project" value="TreeGrafter"/>
</dbReference>
<dbReference type="GO" id="GO:0005739">
    <property type="term" value="C:mitochondrion"/>
    <property type="evidence" value="ECO:0007669"/>
    <property type="project" value="GOC"/>
</dbReference>
<dbReference type="GO" id="GO:0045259">
    <property type="term" value="C:proton-transporting ATP synthase complex"/>
    <property type="evidence" value="ECO:0007669"/>
    <property type="project" value="UniProtKB-KW"/>
</dbReference>
<dbReference type="GO" id="GO:0005524">
    <property type="term" value="F:ATP binding"/>
    <property type="evidence" value="ECO:0007669"/>
    <property type="project" value="UniProtKB-KW"/>
</dbReference>
<dbReference type="GO" id="GO:0016887">
    <property type="term" value="F:ATP hydrolysis activity"/>
    <property type="evidence" value="ECO:0007669"/>
    <property type="project" value="InterPro"/>
</dbReference>
<dbReference type="GO" id="GO:0046933">
    <property type="term" value="F:proton-transporting ATP synthase activity, rotational mechanism"/>
    <property type="evidence" value="ECO:0007669"/>
    <property type="project" value="InterPro"/>
</dbReference>
<dbReference type="GO" id="GO:0042776">
    <property type="term" value="P:proton motive force-driven mitochondrial ATP synthesis"/>
    <property type="evidence" value="ECO:0007669"/>
    <property type="project" value="TreeGrafter"/>
</dbReference>
<dbReference type="CDD" id="cd18110">
    <property type="entry name" value="ATP-synt_F1_beta_C"/>
    <property type="match status" value="1"/>
</dbReference>
<dbReference type="CDD" id="cd18115">
    <property type="entry name" value="ATP-synt_F1_beta_N"/>
    <property type="match status" value="1"/>
</dbReference>
<dbReference type="CDD" id="cd01133">
    <property type="entry name" value="F1-ATPase_beta_CD"/>
    <property type="match status" value="1"/>
</dbReference>
<dbReference type="FunFam" id="1.10.1140.10:FF:000001">
    <property type="entry name" value="ATP synthase subunit beta"/>
    <property type="match status" value="1"/>
</dbReference>
<dbReference type="FunFam" id="3.40.50.12240:FF:000006">
    <property type="entry name" value="ATP synthase subunit beta"/>
    <property type="match status" value="1"/>
</dbReference>
<dbReference type="FunFam" id="3.40.50.300:FF:000004">
    <property type="entry name" value="ATP synthase subunit beta"/>
    <property type="match status" value="1"/>
</dbReference>
<dbReference type="FunFam" id="2.40.10.170:FF:000002">
    <property type="entry name" value="ATP synthase subunit beta, chloroplastic"/>
    <property type="match status" value="1"/>
</dbReference>
<dbReference type="Gene3D" id="2.40.10.170">
    <property type="match status" value="1"/>
</dbReference>
<dbReference type="Gene3D" id="1.10.1140.10">
    <property type="entry name" value="Bovine Mitochondrial F1-atpase, Atp Synthase Beta Chain, Chain D, domain 3"/>
    <property type="match status" value="1"/>
</dbReference>
<dbReference type="Gene3D" id="3.40.50.300">
    <property type="entry name" value="P-loop containing nucleotide triphosphate hydrolases"/>
    <property type="match status" value="1"/>
</dbReference>
<dbReference type="HAMAP" id="MF_01347">
    <property type="entry name" value="ATP_synth_beta_bact"/>
    <property type="match status" value="1"/>
</dbReference>
<dbReference type="InterPro" id="IPR003593">
    <property type="entry name" value="AAA+_ATPase"/>
</dbReference>
<dbReference type="InterPro" id="IPR055190">
    <property type="entry name" value="ATP-synt_VA_C"/>
</dbReference>
<dbReference type="InterPro" id="IPR005722">
    <property type="entry name" value="ATP_synth_F1_bsu"/>
</dbReference>
<dbReference type="InterPro" id="IPR020003">
    <property type="entry name" value="ATPase_a/bsu_AS"/>
</dbReference>
<dbReference type="InterPro" id="IPR050053">
    <property type="entry name" value="ATPase_alpha/beta_chains"/>
</dbReference>
<dbReference type="InterPro" id="IPR004100">
    <property type="entry name" value="ATPase_F1/V1/A1_a/bsu_N"/>
</dbReference>
<dbReference type="InterPro" id="IPR036121">
    <property type="entry name" value="ATPase_F1/V1/A1_a/bsu_N_sf"/>
</dbReference>
<dbReference type="InterPro" id="IPR000194">
    <property type="entry name" value="ATPase_F1/V1/A1_a/bsu_nucl-bd"/>
</dbReference>
<dbReference type="InterPro" id="IPR024034">
    <property type="entry name" value="ATPase_F1/V1_b/a_C"/>
</dbReference>
<dbReference type="InterPro" id="IPR027417">
    <property type="entry name" value="P-loop_NTPase"/>
</dbReference>
<dbReference type="NCBIfam" id="TIGR01039">
    <property type="entry name" value="atpD"/>
    <property type="match status" value="1"/>
</dbReference>
<dbReference type="PANTHER" id="PTHR15184">
    <property type="entry name" value="ATP SYNTHASE"/>
    <property type="match status" value="1"/>
</dbReference>
<dbReference type="PANTHER" id="PTHR15184:SF71">
    <property type="entry name" value="ATP SYNTHASE SUBUNIT BETA, MITOCHONDRIAL"/>
    <property type="match status" value="1"/>
</dbReference>
<dbReference type="Pfam" id="PF00006">
    <property type="entry name" value="ATP-synt_ab"/>
    <property type="match status" value="1"/>
</dbReference>
<dbReference type="Pfam" id="PF02874">
    <property type="entry name" value="ATP-synt_ab_N"/>
    <property type="match status" value="1"/>
</dbReference>
<dbReference type="Pfam" id="PF22919">
    <property type="entry name" value="ATP-synt_VA_C"/>
    <property type="match status" value="1"/>
</dbReference>
<dbReference type="SMART" id="SM00382">
    <property type="entry name" value="AAA"/>
    <property type="match status" value="1"/>
</dbReference>
<dbReference type="SUPFAM" id="SSF47917">
    <property type="entry name" value="C-terminal domain of alpha and beta subunits of F1 ATP synthase"/>
    <property type="match status" value="1"/>
</dbReference>
<dbReference type="SUPFAM" id="SSF50615">
    <property type="entry name" value="N-terminal domain of alpha and beta subunits of F1 ATP synthase"/>
    <property type="match status" value="1"/>
</dbReference>
<dbReference type="SUPFAM" id="SSF52540">
    <property type="entry name" value="P-loop containing nucleoside triphosphate hydrolases"/>
    <property type="match status" value="1"/>
</dbReference>
<dbReference type="PROSITE" id="PS00152">
    <property type="entry name" value="ATPASE_ALPHA_BETA"/>
    <property type="match status" value="1"/>
</dbReference>
<organism>
    <name type="scientific">Cuscuta japonica</name>
    <name type="common">Japanese dodder</name>
    <dbReference type="NCBI Taxonomy" id="81913"/>
    <lineage>
        <taxon>Eukaryota</taxon>
        <taxon>Viridiplantae</taxon>
        <taxon>Streptophyta</taxon>
        <taxon>Embryophyta</taxon>
        <taxon>Tracheophyta</taxon>
        <taxon>Spermatophyta</taxon>
        <taxon>Magnoliopsida</taxon>
        <taxon>eudicotyledons</taxon>
        <taxon>Gunneridae</taxon>
        <taxon>Pentapetalae</taxon>
        <taxon>asterids</taxon>
        <taxon>lamiids</taxon>
        <taxon>Solanales</taxon>
        <taxon>Convolvulaceae</taxon>
        <taxon>Cuscuteae</taxon>
        <taxon>Cuscuta</taxon>
        <taxon>Cuscuta subgen. Monogynella</taxon>
    </lineage>
</organism>
<gene>
    <name type="primary">atpB</name>
</gene>
<keyword id="KW-0066">ATP synthesis</keyword>
<keyword id="KW-0067">ATP-binding</keyword>
<keyword id="KW-0139">CF(1)</keyword>
<keyword id="KW-0375">Hydrogen ion transport</keyword>
<keyword id="KW-0406">Ion transport</keyword>
<keyword id="KW-0472">Membrane</keyword>
<keyword id="KW-0547">Nucleotide-binding</keyword>
<keyword id="KW-0934">Plastid</keyword>
<keyword id="KW-1278">Translocase</keyword>
<keyword id="KW-0813">Transport</keyword>
<geneLocation type="plastid"/>